<comment type="function">
    <text evidence="1">Catalyzes the reversible isomerization of glucose-6-phosphate to fructose-6-phosphate.</text>
</comment>
<comment type="catalytic activity">
    <reaction evidence="1">
        <text>alpha-D-glucose 6-phosphate = beta-D-fructose 6-phosphate</text>
        <dbReference type="Rhea" id="RHEA:11816"/>
        <dbReference type="ChEBI" id="CHEBI:57634"/>
        <dbReference type="ChEBI" id="CHEBI:58225"/>
        <dbReference type="EC" id="5.3.1.9"/>
    </reaction>
</comment>
<comment type="pathway">
    <text evidence="1">Carbohydrate biosynthesis; gluconeogenesis.</text>
</comment>
<comment type="pathway">
    <text evidence="1">Carbohydrate degradation; glycolysis; D-glyceraldehyde 3-phosphate and glycerone phosphate from D-glucose: step 2/4.</text>
</comment>
<comment type="subcellular location">
    <subcellularLocation>
        <location evidence="1">Cytoplasm</location>
    </subcellularLocation>
</comment>
<comment type="similarity">
    <text evidence="1">Belongs to the GPI family.</text>
</comment>
<reference key="1">
    <citation type="journal article" date="2007" name="Proc. Natl. Acad. Sci. U.S.A.">
        <title>The genome of Syntrophus aciditrophicus: life at the thermodynamic limit of microbial growth.</title>
        <authorList>
            <person name="McInerney M.J."/>
            <person name="Rohlin L."/>
            <person name="Mouttaki H."/>
            <person name="Kim U."/>
            <person name="Krupp R.S."/>
            <person name="Rios-Hernandez L."/>
            <person name="Sieber J."/>
            <person name="Struchtemeyer C.G."/>
            <person name="Bhattacharyya A."/>
            <person name="Campbell J.W."/>
            <person name="Gunsalus R.P."/>
        </authorList>
    </citation>
    <scope>NUCLEOTIDE SEQUENCE [LARGE SCALE GENOMIC DNA]</scope>
    <source>
        <strain>SB</strain>
    </source>
</reference>
<sequence length="546" mass="60934">MTASKKLTGCQAWKALAAHRRNWKLHLRDLFAGDPGRGERMTAEAVGLFLDYSKNFVTDETLKLLLRLAEETGLRGRIEALFRGEKINLTENRAALHVALRSPKGTSIVVDGENVVPQVHDVLDRMAAFAVQVRSGSWKGHSGKGIRNVVNIGIGGSDLGPVMAYEALKYYSDRSLTFRFVSNIDGTDFAEAVQDLDAAETLFIVASKTFTTLETMTNASTARAWLLQGFKGDEKAVAKHFVAVSTNTAEVAKFGIDTANMFGFWNWVGGRYSMDSAIGLSTMLAIGPDNFRDMLAGFHAMDVHFRTAPFGVNLPVLMGLLTIWYNNFFAAETVAVLPYEQYLKRFPAYLQQLTMESNGKRVTLDGMEVDYQTSPIYWGEPGTNGQHSFYQLIHQGTKLIPCDFIAFVEPLHPLGRHHDLLMANVFAQAEALAFGRTLEEVTSEGIPAWLAPHKVFEGNRPSNTILAQRLTPETLGKLVALYEHSVFTQSAIWNINPFDQWGVELGKVLAQRVITELESREEPELGHDSSTNAMIRRYRKFRERME</sequence>
<proteinExistence type="inferred from homology"/>
<feature type="chain" id="PRO_0000252659" description="Glucose-6-phosphate isomerase">
    <location>
        <begin position="1"/>
        <end position="546"/>
    </location>
</feature>
<feature type="active site" description="Proton donor" evidence="1">
    <location>
        <position position="356"/>
    </location>
</feature>
<feature type="active site" evidence="1">
    <location>
        <position position="387"/>
    </location>
</feature>
<feature type="active site" evidence="1">
    <location>
        <position position="507"/>
    </location>
</feature>
<name>G6PI_SYNAS</name>
<protein>
    <recommendedName>
        <fullName evidence="1">Glucose-6-phosphate isomerase</fullName>
        <shortName evidence="1">GPI</shortName>
        <ecNumber evidence="1">5.3.1.9</ecNumber>
    </recommendedName>
    <alternativeName>
        <fullName evidence="1">Phosphoglucose isomerase</fullName>
        <shortName evidence="1">PGI</shortName>
    </alternativeName>
    <alternativeName>
        <fullName evidence="1">Phosphohexose isomerase</fullName>
        <shortName evidence="1">PHI</shortName>
    </alternativeName>
</protein>
<dbReference type="EC" id="5.3.1.9" evidence="1"/>
<dbReference type="EMBL" id="CP000252">
    <property type="protein sequence ID" value="ABC76641.1"/>
    <property type="molecule type" value="Genomic_DNA"/>
</dbReference>
<dbReference type="RefSeq" id="WP_011416675.1">
    <property type="nucleotide sequence ID" value="NC_007759.1"/>
</dbReference>
<dbReference type="SMR" id="Q2LRD0"/>
<dbReference type="FunCoup" id="Q2LRD0">
    <property type="interactions" value="434"/>
</dbReference>
<dbReference type="STRING" id="56780.SYN_02950"/>
<dbReference type="KEGG" id="sat:SYN_02950"/>
<dbReference type="eggNOG" id="COG0166">
    <property type="taxonomic scope" value="Bacteria"/>
</dbReference>
<dbReference type="HOGENOM" id="CLU_017947_3_1_7"/>
<dbReference type="InParanoid" id="Q2LRD0"/>
<dbReference type="OrthoDB" id="140919at2"/>
<dbReference type="UniPathway" id="UPA00109">
    <property type="reaction ID" value="UER00181"/>
</dbReference>
<dbReference type="UniPathway" id="UPA00138"/>
<dbReference type="Proteomes" id="UP000001933">
    <property type="component" value="Chromosome"/>
</dbReference>
<dbReference type="GO" id="GO:0005829">
    <property type="term" value="C:cytosol"/>
    <property type="evidence" value="ECO:0007669"/>
    <property type="project" value="TreeGrafter"/>
</dbReference>
<dbReference type="GO" id="GO:0097367">
    <property type="term" value="F:carbohydrate derivative binding"/>
    <property type="evidence" value="ECO:0007669"/>
    <property type="project" value="InterPro"/>
</dbReference>
<dbReference type="GO" id="GO:0004347">
    <property type="term" value="F:glucose-6-phosphate isomerase activity"/>
    <property type="evidence" value="ECO:0007669"/>
    <property type="project" value="UniProtKB-UniRule"/>
</dbReference>
<dbReference type="GO" id="GO:0048029">
    <property type="term" value="F:monosaccharide binding"/>
    <property type="evidence" value="ECO:0007669"/>
    <property type="project" value="TreeGrafter"/>
</dbReference>
<dbReference type="GO" id="GO:0006094">
    <property type="term" value="P:gluconeogenesis"/>
    <property type="evidence" value="ECO:0007669"/>
    <property type="project" value="UniProtKB-UniRule"/>
</dbReference>
<dbReference type="GO" id="GO:0051156">
    <property type="term" value="P:glucose 6-phosphate metabolic process"/>
    <property type="evidence" value="ECO:0007669"/>
    <property type="project" value="TreeGrafter"/>
</dbReference>
<dbReference type="GO" id="GO:0006096">
    <property type="term" value="P:glycolytic process"/>
    <property type="evidence" value="ECO:0007669"/>
    <property type="project" value="UniProtKB-UniRule"/>
</dbReference>
<dbReference type="CDD" id="cd05015">
    <property type="entry name" value="SIS_PGI_1"/>
    <property type="match status" value="1"/>
</dbReference>
<dbReference type="CDD" id="cd05016">
    <property type="entry name" value="SIS_PGI_2"/>
    <property type="match status" value="1"/>
</dbReference>
<dbReference type="FunFam" id="3.40.50.10490:FF:000018">
    <property type="entry name" value="Glucose-6-phosphate isomerase"/>
    <property type="match status" value="1"/>
</dbReference>
<dbReference type="Gene3D" id="1.10.1390.10">
    <property type="match status" value="1"/>
</dbReference>
<dbReference type="Gene3D" id="3.40.50.10490">
    <property type="entry name" value="Glucose-6-phosphate isomerase like protein, domain 1"/>
    <property type="match status" value="2"/>
</dbReference>
<dbReference type="HAMAP" id="MF_00473">
    <property type="entry name" value="G6P_isomerase"/>
    <property type="match status" value="1"/>
</dbReference>
<dbReference type="InterPro" id="IPR001672">
    <property type="entry name" value="G6P_Isomerase"/>
</dbReference>
<dbReference type="InterPro" id="IPR023096">
    <property type="entry name" value="G6P_Isomerase_C"/>
</dbReference>
<dbReference type="InterPro" id="IPR018189">
    <property type="entry name" value="Phosphoglucose_isomerase_CS"/>
</dbReference>
<dbReference type="InterPro" id="IPR046348">
    <property type="entry name" value="SIS_dom_sf"/>
</dbReference>
<dbReference type="InterPro" id="IPR035476">
    <property type="entry name" value="SIS_PGI_1"/>
</dbReference>
<dbReference type="InterPro" id="IPR035482">
    <property type="entry name" value="SIS_PGI_2"/>
</dbReference>
<dbReference type="NCBIfam" id="NF001211">
    <property type="entry name" value="PRK00179.1"/>
    <property type="match status" value="1"/>
</dbReference>
<dbReference type="PANTHER" id="PTHR11469">
    <property type="entry name" value="GLUCOSE-6-PHOSPHATE ISOMERASE"/>
    <property type="match status" value="1"/>
</dbReference>
<dbReference type="PANTHER" id="PTHR11469:SF1">
    <property type="entry name" value="GLUCOSE-6-PHOSPHATE ISOMERASE"/>
    <property type="match status" value="1"/>
</dbReference>
<dbReference type="Pfam" id="PF00342">
    <property type="entry name" value="PGI"/>
    <property type="match status" value="1"/>
</dbReference>
<dbReference type="PRINTS" id="PR00662">
    <property type="entry name" value="G6PISOMERASE"/>
</dbReference>
<dbReference type="SUPFAM" id="SSF53697">
    <property type="entry name" value="SIS domain"/>
    <property type="match status" value="1"/>
</dbReference>
<dbReference type="PROSITE" id="PS00765">
    <property type="entry name" value="P_GLUCOSE_ISOMERASE_1"/>
    <property type="match status" value="1"/>
</dbReference>
<dbReference type="PROSITE" id="PS00174">
    <property type="entry name" value="P_GLUCOSE_ISOMERASE_2"/>
    <property type="match status" value="1"/>
</dbReference>
<dbReference type="PROSITE" id="PS51463">
    <property type="entry name" value="P_GLUCOSE_ISOMERASE_3"/>
    <property type="match status" value="1"/>
</dbReference>
<accession>Q2LRD0</accession>
<keyword id="KW-0963">Cytoplasm</keyword>
<keyword id="KW-0312">Gluconeogenesis</keyword>
<keyword id="KW-0324">Glycolysis</keyword>
<keyword id="KW-0413">Isomerase</keyword>
<keyword id="KW-1185">Reference proteome</keyword>
<organism>
    <name type="scientific">Syntrophus aciditrophicus (strain SB)</name>
    <dbReference type="NCBI Taxonomy" id="56780"/>
    <lineage>
        <taxon>Bacteria</taxon>
        <taxon>Pseudomonadati</taxon>
        <taxon>Thermodesulfobacteriota</taxon>
        <taxon>Syntrophia</taxon>
        <taxon>Syntrophales</taxon>
        <taxon>Syntrophaceae</taxon>
        <taxon>Syntrophus</taxon>
    </lineage>
</organism>
<evidence type="ECO:0000255" key="1">
    <source>
        <dbReference type="HAMAP-Rule" id="MF_00473"/>
    </source>
</evidence>
<gene>
    <name evidence="1" type="primary">pgi</name>
    <name type="ordered locus">SYNAS_07620</name>
    <name type="ORF">SYN_02950</name>
</gene>